<organism>
    <name type="scientific">Paracoccus denitrificans (strain Pd 1222)</name>
    <dbReference type="NCBI Taxonomy" id="318586"/>
    <lineage>
        <taxon>Bacteria</taxon>
        <taxon>Pseudomonadati</taxon>
        <taxon>Pseudomonadota</taxon>
        <taxon>Alphaproteobacteria</taxon>
        <taxon>Rhodobacterales</taxon>
        <taxon>Paracoccaceae</taxon>
        <taxon>Paracoccus</taxon>
    </lineage>
</organism>
<dbReference type="EC" id="3.6.4.-" evidence="1"/>
<dbReference type="EMBL" id="CP000489">
    <property type="protein sequence ID" value="ABL68805.1"/>
    <property type="molecule type" value="Genomic_DNA"/>
</dbReference>
<dbReference type="RefSeq" id="WP_011747038.1">
    <property type="nucleotide sequence ID" value="NC_008686.1"/>
</dbReference>
<dbReference type="SMR" id="A1AZW1"/>
<dbReference type="STRING" id="318586.Pden_0693"/>
<dbReference type="EnsemblBacteria" id="ABL68805">
    <property type="protein sequence ID" value="ABL68805"/>
    <property type="gene ID" value="Pden_0693"/>
</dbReference>
<dbReference type="GeneID" id="93451917"/>
<dbReference type="KEGG" id="pde:Pden_0693"/>
<dbReference type="eggNOG" id="COG2255">
    <property type="taxonomic scope" value="Bacteria"/>
</dbReference>
<dbReference type="HOGENOM" id="CLU_055599_1_0_5"/>
<dbReference type="OrthoDB" id="9804478at2"/>
<dbReference type="Proteomes" id="UP000000361">
    <property type="component" value="Chromosome 1"/>
</dbReference>
<dbReference type="GO" id="GO:0005737">
    <property type="term" value="C:cytoplasm"/>
    <property type="evidence" value="ECO:0007669"/>
    <property type="project" value="UniProtKB-SubCell"/>
</dbReference>
<dbReference type="GO" id="GO:0048476">
    <property type="term" value="C:Holliday junction resolvase complex"/>
    <property type="evidence" value="ECO:0007669"/>
    <property type="project" value="UniProtKB-UniRule"/>
</dbReference>
<dbReference type="GO" id="GO:0005524">
    <property type="term" value="F:ATP binding"/>
    <property type="evidence" value="ECO:0007669"/>
    <property type="project" value="UniProtKB-UniRule"/>
</dbReference>
<dbReference type="GO" id="GO:0016887">
    <property type="term" value="F:ATP hydrolysis activity"/>
    <property type="evidence" value="ECO:0007669"/>
    <property type="project" value="InterPro"/>
</dbReference>
<dbReference type="GO" id="GO:0000400">
    <property type="term" value="F:four-way junction DNA binding"/>
    <property type="evidence" value="ECO:0007669"/>
    <property type="project" value="UniProtKB-UniRule"/>
</dbReference>
<dbReference type="GO" id="GO:0009378">
    <property type="term" value="F:four-way junction helicase activity"/>
    <property type="evidence" value="ECO:0007669"/>
    <property type="project" value="InterPro"/>
</dbReference>
<dbReference type="GO" id="GO:0006310">
    <property type="term" value="P:DNA recombination"/>
    <property type="evidence" value="ECO:0007669"/>
    <property type="project" value="UniProtKB-UniRule"/>
</dbReference>
<dbReference type="GO" id="GO:0006281">
    <property type="term" value="P:DNA repair"/>
    <property type="evidence" value="ECO:0007669"/>
    <property type="project" value="UniProtKB-UniRule"/>
</dbReference>
<dbReference type="CDD" id="cd00009">
    <property type="entry name" value="AAA"/>
    <property type="match status" value="1"/>
</dbReference>
<dbReference type="Gene3D" id="1.10.8.60">
    <property type="match status" value="1"/>
</dbReference>
<dbReference type="Gene3D" id="3.40.50.300">
    <property type="entry name" value="P-loop containing nucleotide triphosphate hydrolases"/>
    <property type="match status" value="1"/>
</dbReference>
<dbReference type="Gene3D" id="1.10.10.10">
    <property type="entry name" value="Winged helix-like DNA-binding domain superfamily/Winged helix DNA-binding domain"/>
    <property type="match status" value="1"/>
</dbReference>
<dbReference type="HAMAP" id="MF_00016">
    <property type="entry name" value="DNA_HJ_migration_RuvB"/>
    <property type="match status" value="1"/>
</dbReference>
<dbReference type="InterPro" id="IPR003593">
    <property type="entry name" value="AAA+_ATPase"/>
</dbReference>
<dbReference type="InterPro" id="IPR041445">
    <property type="entry name" value="AAA_lid_4"/>
</dbReference>
<dbReference type="InterPro" id="IPR004605">
    <property type="entry name" value="DNA_helicase_Holl-junc_RuvB"/>
</dbReference>
<dbReference type="InterPro" id="IPR027417">
    <property type="entry name" value="P-loop_NTPase"/>
</dbReference>
<dbReference type="InterPro" id="IPR008824">
    <property type="entry name" value="RuvB-like_N"/>
</dbReference>
<dbReference type="InterPro" id="IPR008823">
    <property type="entry name" value="RuvB_C"/>
</dbReference>
<dbReference type="InterPro" id="IPR036388">
    <property type="entry name" value="WH-like_DNA-bd_sf"/>
</dbReference>
<dbReference type="InterPro" id="IPR036390">
    <property type="entry name" value="WH_DNA-bd_sf"/>
</dbReference>
<dbReference type="NCBIfam" id="NF000868">
    <property type="entry name" value="PRK00080.1"/>
    <property type="match status" value="1"/>
</dbReference>
<dbReference type="NCBIfam" id="TIGR00635">
    <property type="entry name" value="ruvB"/>
    <property type="match status" value="1"/>
</dbReference>
<dbReference type="PANTHER" id="PTHR42848">
    <property type="match status" value="1"/>
</dbReference>
<dbReference type="PANTHER" id="PTHR42848:SF1">
    <property type="entry name" value="HOLLIDAY JUNCTION BRANCH MIGRATION COMPLEX SUBUNIT RUVB"/>
    <property type="match status" value="1"/>
</dbReference>
<dbReference type="Pfam" id="PF17864">
    <property type="entry name" value="AAA_lid_4"/>
    <property type="match status" value="1"/>
</dbReference>
<dbReference type="Pfam" id="PF05491">
    <property type="entry name" value="RuvB_C"/>
    <property type="match status" value="1"/>
</dbReference>
<dbReference type="Pfam" id="PF05496">
    <property type="entry name" value="RuvB_N"/>
    <property type="match status" value="1"/>
</dbReference>
<dbReference type="SMART" id="SM00382">
    <property type="entry name" value="AAA"/>
    <property type="match status" value="1"/>
</dbReference>
<dbReference type="SUPFAM" id="SSF52540">
    <property type="entry name" value="P-loop containing nucleoside triphosphate hydrolases"/>
    <property type="match status" value="1"/>
</dbReference>
<dbReference type="SUPFAM" id="SSF46785">
    <property type="entry name" value="Winged helix' DNA-binding domain"/>
    <property type="match status" value="1"/>
</dbReference>
<keyword id="KW-0067">ATP-binding</keyword>
<keyword id="KW-0963">Cytoplasm</keyword>
<keyword id="KW-0227">DNA damage</keyword>
<keyword id="KW-0233">DNA recombination</keyword>
<keyword id="KW-0234">DNA repair</keyword>
<keyword id="KW-0238">DNA-binding</keyword>
<keyword id="KW-0378">Hydrolase</keyword>
<keyword id="KW-0547">Nucleotide-binding</keyword>
<keyword id="KW-1185">Reference proteome</keyword>
<comment type="function">
    <text evidence="1">The RuvA-RuvB-RuvC complex processes Holliday junction (HJ) DNA during genetic recombination and DNA repair, while the RuvA-RuvB complex plays an important role in the rescue of blocked DNA replication forks via replication fork reversal (RFR). RuvA specifically binds to HJ cruciform DNA, conferring on it an open structure. The RuvB hexamer acts as an ATP-dependent pump, pulling dsDNA into and through the RuvAB complex. RuvB forms 2 homohexamers on either side of HJ DNA bound by 1 or 2 RuvA tetramers; 4 subunits per hexamer contact DNA at a time. Coordinated motions by a converter formed by DNA-disengaged RuvB subunits stimulates ATP hydrolysis and nucleotide exchange. Immobilization of the converter enables RuvB to convert the ATP-contained energy into a lever motion, pulling 2 nucleotides of DNA out of the RuvA tetramer per ATP hydrolyzed, thus driving DNA branch migration. The RuvB motors rotate together with the DNA substrate, which together with the progressing nucleotide cycle form the mechanistic basis for DNA recombination by continuous HJ branch migration. Branch migration allows RuvC to scan DNA until it finds its consensus sequence, where it cleaves and resolves cruciform DNA.</text>
</comment>
<comment type="catalytic activity">
    <reaction evidence="1">
        <text>ATP + H2O = ADP + phosphate + H(+)</text>
        <dbReference type="Rhea" id="RHEA:13065"/>
        <dbReference type="ChEBI" id="CHEBI:15377"/>
        <dbReference type="ChEBI" id="CHEBI:15378"/>
        <dbReference type="ChEBI" id="CHEBI:30616"/>
        <dbReference type="ChEBI" id="CHEBI:43474"/>
        <dbReference type="ChEBI" id="CHEBI:456216"/>
    </reaction>
</comment>
<comment type="subunit">
    <text evidence="1">Homohexamer. Forms an RuvA(8)-RuvB(12)-Holliday junction (HJ) complex. HJ DNA is sandwiched between 2 RuvA tetramers; dsDNA enters through RuvA and exits via RuvB. An RuvB hexamer assembles on each DNA strand where it exits the tetramer. Each RuvB hexamer is contacted by two RuvA subunits (via domain III) on 2 adjacent RuvB subunits; this complex drives branch migration. In the full resolvosome a probable DNA-RuvA(4)-RuvB(12)-RuvC(2) complex forms which resolves the HJ.</text>
</comment>
<comment type="subcellular location">
    <subcellularLocation>
        <location evidence="1">Cytoplasm</location>
    </subcellularLocation>
</comment>
<comment type="domain">
    <text evidence="1">Has 3 domains, the large (RuvB-L) and small ATPase (RuvB-S) domains and the C-terminal head (RuvB-H) domain. The head domain binds DNA, while the ATPase domains jointly bind ATP, ADP or are empty depending on the state of the subunit in the translocation cycle. During a single DNA translocation step the structure of each domain remains the same, but their relative positions change.</text>
</comment>
<comment type="similarity">
    <text evidence="1">Belongs to the RuvB family.</text>
</comment>
<gene>
    <name evidence="1" type="primary">ruvB</name>
    <name type="ordered locus">Pden_0693</name>
</gene>
<name>RUVB_PARDP</name>
<feature type="chain" id="PRO_1000001438" description="Holliday junction branch migration complex subunit RuvB">
    <location>
        <begin position="1"/>
        <end position="341"/>
    </location>
</feature>
<feature type="region of interest" description="Disordered" evidence="2">
    <location>
        <begin position="1"/>
        <end position="21"/>
    </location>
</feature>
<feature type="region of interest" description="Large ATPase domain (RuvB-L)" evidence="1">
    <location>
        <begin position="4"/>
        <end position="183"/>
    </location>
</feature>
<feature type="region of interest" description="Small ATPAse domain (RuvB-S)" evidence="1">
    <location>
        <begin position="184"/>
        <end position="254"/>
    </location>
</feature>
<feature type="region of interest" description="Head domain (RuvB-H)" evidence="1">
    <location>
        <begin position="257"/>
        <end position="341"/>
    </location>
</feature>
<feature type="binding site" evidence="1">
    <location>
        <position position="22"/>
    </location>
    <ligand>
        <name>ATP</name>
        <dbReference type="ChEBI" id="CHEBI:30616"/>
    </ligand>
</feature>
<feature type="binding site" evidence="1">
    <location>
        <position position="23"/>
    </location>
    <ligand>
        <name>ATP</name>
        <dbReference type="ChEBI" id="CHEBI:30616"/>
    </ligand>
</feature>
<feature type="binding site" evidence="1">
    <location>
        <position position="64"/>
    </location>
    <ligand>
        <name>ATP</name>
        <dbReference type="ChEBI" id="CHEBI:30616"/>
    </ligand>
</feature>
<feature type="binding site" evidence="1">
    <location>
        <position position="67"/>
    </location>
    <ligand>
        <name>ATP</name>
        <dbReference type="ChEBI" id="CHEBI:30616"/>
    </ligand>
</feature>
<feature type="binding site" evidence="1">
    <location>
        <position position="68"/>
    </location>
    <ligand>
        <name>ATP</name>
        <dbReference type="ChEBI" id="CHEBI:30616"/>
    </ligand>
</feature>
<feature type="binding site" evidence="1">
    <location>
        <position position="68"/>
    </location>
    <ligand>
        <name>Mg(2+)</name>
        <dbReference type="ChEBI" id="CHEBI:18420"/>
    </ligand>
</feature>
<feature type="binding site" evidence="1">
    <location>
        <position position="69"/>
    </location>
    <ligand>
        <name>ATP</name>
        <dbReference type="ChEBI" id="CHEBI:30616"/>
    </ligand>
</feature>
<feature type="binding site" evidence="1">
    <location>
        <begin position="130"/>
        <end position="132"/>
    </location>
    <ligand>
        <name>ATP</name>
        <dbReference type="ChEBI" id="CHEBI:30616"/>
    </ligand>
</feature>
<feature type="binding site" evidence="1">
    <location>
        <position position="173"/>
    </location>
    <ligand>
        <name>ATP</name>
        <dbReference type="ChEBI" id="CHEBI:30616"/>
    </ligand>
</feature>
<feature type="binding site" evidence="1">
    <location>
        <position position="183"/>
    </location>
    <ligand>
        <name>ATP</name>
        <dbReference type="ChEBI" id="CHEBI:30616"/>
    </ligand>
</feature>
<feature type="binding site" evidence="1">
    <location>
        <position position="220"/>
    </location>
    <ligand>
        <name>ATP</name>
        <dbReference type="ChEBI" id="CHEBI:30616"/>
    </ligand>
</feature>
<feature type="binding site" evidence="1">
    <location>
        <position position="293"/>
    </location>
    <ligand>
        <name>DNA</name>
        <dbReference type="ChEBI" id="CHEBI:16991"/>
    </ligand>
</feature>
<feature type="binding site" evidence="1">
    <location>
        <position position="312"/>
    </location>
    <ligand>
        <name>DNA</name>
        <dbReference type="ChEBI" id="CHEBI:16991"/>
    </ligand>
</feature>
<feature type="binding site" evidence="1">
    <location>
        <position position="317"/>
    </location>
    <ligand>
        <name>DNA</name>
        <dbReference type="ChEBI" id="CHEBI:16991"/>
    </ligand>
</feature>
<accession>A1AZW1</accession>
<proteinExistence type="inferred from homology"/>
<reference key="1">
    <citation type="submission" date="2006-12" db="EMBL/GenBank/DDBJ databases">
        <title>Complete sequence of chromosome 1 of Paracoccus denitrificans PD1222.</title>
        <authorList>
            <person name="Copeland A."/>
            <person name="Lucas S."/>
            <person name="Lapidus A."/>
            <person name="Barry K."/>
            <person name="Detter J.C."/>
            <person name="Glavina del Rio T."/>
            <person name="Hammon N."/>
            <person name="Israni S."/>
            <person name="Dalin E."/>
            <person name="Tice H."/>
            <person name="Pitluck S."/>
            <person name="Munk A.C."/>
            <person name="Brettin T."/>
            <person name="Bruce D."/>
            <person name="Han C."/>
            <person name="Tapia R."/>
            <person name="Gilna P."/>
            <person name="Schmutz J."/>
            <person name="Larimer F."/>
            <person name="Land M."/>
            <person name="Hauser L."/>
            <person name="Kyrpides N."/>
            <person name="Lykidis A."/>
            <person name="Spiro S."/>
            <person name="Richardson D.J."/>
            <person name="Moir J.W.B."/>
            <person name="Ferguson S.J."/>
            <person name="van Spanning R.J.M."/>
            <person name="Richardson P."/>
        </authorList>
    </citation>
    <scope>NUCLEOTIDE SEQUENCE [LARGE SCALE GENOMIC DNA]</scope>
    <source>
        <strain>Pd 1222</strain>
    </source>
</reference>
<protein>
    <recommendedName>
        <fullName evidence="1">Holliday junction branch migration complex subunit RuvB</fullName>
        <ecNumber evidence="1">3.6.4.-</ecNumber>
    </recommendedName>
</protein>
<sequence length="341" mass="37862">MSQPDPMLRPEPLESDGEDRALRPQRLEDFVGQAEARANLRVFIESARMRGKAMDHTLFHGPPGLGKTTLAQIMARELGVNFKMTSGPVLARAGDLAAILTNLEARDVLFIDEIHRMNPAVEEILYPAMEDFELDLVIGEGPAARTVRIELQPFTLVGATTRLGLLTTPLRDRFGIPTRLQFYTIEELDLIVTRGARLMGIPSEPEGTREIARRARGTPRIAGRLLRRVVDFALVEGDGRLTRKIADSALTRLGVDHLGLDTADRRYLTLMAEHYGGGPVGVETLSAALSESRDSIEEVIEPYLMQQGLVSRTPRGRMLARLGWRHLGLDAPRTQESLFDE</sequence>
<evidence type="ECO:0000255" key="1">
    <source>
        <dbReference type="HAMAP-Rule" id="MF_00016"/>
    </source>
</evidence>
<evidence type="ECO:0000256" key="2">
    <source>
        <dbReference type="SAM" id="MobiDB-lite"/>
    </source>
</evidence>